<dbReference type="EC" id="7.1.1.-" evidence="1"/>
<dbReference type="EMBL" id="CP001072">
    <property type="protein sequence ID" value="ACD48716.1"/>
    <property type="molecule type" value="Genomic_DNA"/>
</dbReference>
<dbReference type="RefSeq" id="WP_000579758.1">
    <property type="nucleotide sequence ID" value="NC_010698.2"/>
</dbReference>
<dbReference type="SMR" id="B2UV34"/>
<dbReference type="GeneID" id="93237596"/>
<dbReference type="KEGG" id="hps:HPSH_06580"/>
<dbReference type="HOGENOM" id="CLU_144724_0_0_7"/>
<dbReference type="GO" id="GO:0030964">
    <property type="term" value="C:NADH dehydrogenase complex"/>
    <property type="evidence" value="ECO:0007669"/>
    <property type="project" value="TreeGrafter"/>
</dbReference>
<dbReference type="GO" id="GO:0005886">
    <property type="term" value="C:plasma membrane"/>
    <property type="evidence" value="ECO:0007669"/>
    <property type="project" value="UniProtKB-SubCell"/>
</dbReference>
<dbReference type="GO" id="GO:0050136">
    <property type="term" value="F:NADH:ubiquinone reductase (non-electrogenic) activity"/>
    <property type="evidence" value="ECO:0007669"/>
    <property type="project" value="UniProtKB-UniRule"/>
</dbReference>
<dbReference type="GO" id="GO:0048038">
    <property type="term" value="F:quinone binding"/>
    <property type="evidence" value="ECO:0007669"/>
    <property type="project" value="UniProtKB-KW"/>
</dbReference>
<dbReference type="GO" id="GO:0042773">
    <property type="term" value="P:ATP synthesis coupled electron transport"/>
    <property type="evidence" value="ECO:0007669"/>
    <property type="project" value="InterPro"/>
</dbReference>
<dbReference type="FunFam" id="1.10.287.3510:FF:000001">
    <property type="entry name" value="NADH-quinone oxidoreductase subunit K"/>
    <property type="match status" value="1"/>
</dbReference>
<dbReference type="Gene3D" id="1.10.287.3510">
    <property type="match status" value="1"/>
</dbReference>
<dbReference type="HAMAP" id="MF_01456">
    <property type="entry name" value="NDH1_NuoK"/>
    <property type="match status" value="1"/>
</dbReference>
<dbReference type="InterPro" id="IPR001133">
    <property type="entry name" value="NADH_UbQ_OxRdtase_chain4L/K"/>
</dbReference>
<dbReference type="InterPro" id="IPR039428">
    <property type="entry name" value="NUOK/Mnh_C1-like"/>
</dbReference>
<dbReference type="NCBIfam" id="NF004320">
    <property type="entry name" value="PRK05715.1-2"/>
    <property type="match status" value="1"/>
</dbReference>
<dbReference type="NCBIfam" id="NF004321">
    <property type="entry name" value="PRK05715.1-3"/>
    <property type="match status" value="1"/>
</dbReference>
<dbReference type="NCBIfam" id="NF004323">
    <property type="entry name" value="PRK05715.1-5"/>
    <property type="match status" value="1"/>
</dbReference>
<dbReference type="PANTHER" id="PTHR11434:SF21">
    <property type="entry name" value="NADH DEHYDROGENASE SUBUNIT 4L-RELATED"/>
    <property type="match status" value="1"/>
</dbReference>
<dbReference type="PANTHER" id="PTHR11434">
    <property type="entry name" value="NADH-UBIQUINONE OXIDOREDUCTASE SUBUNIT ND4L"/>
    <property type="match status" value="1"/>
</dbReference>
<dbReference type="Pfam" id="PF00420">
    <property type="entry name" value="Oxidored_q2"/>
    <property type="match status" value="1"/>
</dbReference>
<evidence type="ECO:0000255" key="1">
    <source>
        <dbReference type="HAMAP-Rule" id="MF_01456"/>
    </source>
</evidence>
<reference key="1">
    <citation type="submission" date="2008-05" db="EMBL/GenBank/DDBJ databases">
        <title>Genome sequence of Helicobacter pylori from the remote Amazon: traces of Asian ancestry of the first Americans.</title>
        <authorList>
            <person name="Kersulyte D."/>
            <person name="Kalia A."/>
            <person name="Gilman R.H."/>
            <person name="Berg D.E."/>
        </authorList>
    </citation>
    <scope>NUCLEOTIDE SEQUENCE [LARGE SCALE GENOMIC DNA]</scope>
    <source>
        <strain>Shi470</strain>
    </source>
</reference>
<keyword id="KW-0997">Cell inner membrane</keyword>
<keyword id="KW-1003">Cell membrane</keyword>
<keyword id="KW-0472">Membrane</keyword>
<keyword id="KW-0520">NAD</keyword>
<keyword id="KW-0874">Quinone</keyword>
<keyword id="KW-1278">Translocase</keyword>
<keyword id="KW-0812">Transmembrane</keyword>
<keyword id="KW-1133">Transmembrane helix</keyword>
<keyword id="KW-0813">Transport</keyword>
<keyword id="KW-0830">Ubiquinone</keyword>
<accession>B2UV34</accession>
<proteinExistence type="inferred from homology"/>
<organism>
    <name type="scientific">Helicobacter pylori (strain Shi470)</name>
    <dbReference type="NCBI Taxonomy" id="512562"/>
    <lineage>
        <taxon>Bacteria</taxon>
        <taxon>Pseudomonadati</taxon>
        <taxon>Campylobacterota</taxon>
        <taxon>Epsilonproteobacteria</taxon>
        <taxon>Campylobacterales</taxon>
        <taxon>Helicobacteraceae</taxon>
        <taxon>Helicobacter</taxon>
    </lineage>
</organism>
<protein>
    <recommendedName>
        <fullName evidence="1">NADH-quinone oxidoreductase subunit K</fullName>
        <ecNumber evidence="1">7.1.1.-</ecNumber>
    </recommendedName>
    <alternativeName>
        <fullName evidence="1">NADH dehydrogenase I subunit K</fullName>
    </alternativeName>
    <alternativeName>
        <fullName evidence="1">NDH-1 subunit K</fullName>
    </alternativeName>
</protein>
<comment type="function">
    <text evidence="1">NDH-1 shuttles electrons from NADH, via FMN and iron-sulfur (Fe-S) centers, to quinones in the respiratory chain. The immediate electron acceptor for the enzyme in this species is believed to be ubiquinone. Couples the redox reaction to proton translocation (for every two electrons transferred, four hydrogen ions are translocated across the cytoplasmic membrane), and thus conserves the redox energy in a proton gradient.</text>
</comment>
<comment type="catalytic activity">
    <reaction evidence="1">
        <text>a quinone + NADH + 5 H(+)(in) = a quinol + NAD(+) + 4 H(+)(out)</text>
        <dbReference type="Rhea" id="RHEA:57888"/>
        <dbReference type="ChEBI" id="CHEBI:15378"/>
        <dbReference type="ChEBI" id="CHEBI:24646"/>
        <dbReference type="ChEBI" id="CHEBI:57540"/>
        <dbReference type="ChEBI" id="CHEBI:57945"/>
        <dbReference type="ChEBI" id="CHEBI:132124"/>
    </reaction>
</comment>
<comment type="subunit">
    <text evidence="1">NDH-1 is composed of 14 different subunits. Subunits NuoA, H, J, K, L, M, N constitute the membrane sector of the complex.</text>
</comment>
<comment type="subcellular location">
    <subcellularLocation>
        <location evidence="1">Cell inner membrane</location>
        <topology evidence="1">Multi-pass membrane protein</topology>
    </subcellularLocation>
</comment>
<comment type="similarity">
    <text evidence="1">Belongs to the complex I subunit 4L family.</text>
</comment>
<name>NUOK_HELPS</name>
<feature type="chain" id="PRO_0000390096" description="NADH-quinone oxidoreductase subunit K">
    <location>
        <begin position="1"/>
        <end position="100"/>
    </location>
</feature>
<feature type="transmembrane region" description="Helical" evidence="1">
    <location>
        <begin position="1"/>
        <end position="21"/>
    </location>
</feature>
<feature type="transmembrane region" description="Helical" evidence="1">
    <location>
        <begin position="28"/>
        <end position="48"/>
    </location>
</feature>
<feature type="transmembrane region" description="Helical" evidence="1">
    <location>
        <begin position="64"/>
        <end position="84"/>
    </location>
</feature>
<sequence length="100" mass="10993">MIGLNHYLIVSGLLFCIGLAGMLKRKNILLLFFSTEIMLNAINIGFVAISKYTHNLDGQMFALFIIAIAASEVAIGLGLVILWFKKFKSLDIDSLNAMKG</sequence>
<gene>
    <name evidence="1" type="primary">nuoK</name>
    <name type="ordered locus">HPSH_06580</name>
</gene>